<sequence>MSQDIYDYANKLERAVRALPEYRKALEAREEIKADEAASQLFDEFVAVQEKLQGLMQTGQLPTETEQADIQALSQKIEANDLLKGYFNAQQALSVYVNDIERIVFAPLKDLAK</sequence>
<organism>
    <name type="scientific">Streptococcus equi subsp. equi (strain 4047)</name>
    <dbReference type="NCBI Taxonomy" id="553482"/>
    <lineage>
        <taxon>Bacteria</taxon>
        <taxon>Bacillati</taxon>
        <taxon>Bacillota</taxon>
        <taxon>Bacilli</taxon>
        <taxon>Lactobacillales</taxon>
        <taxon>Streptococcaceae</taxon>
        <taxon>Streptococcus</taxon>
    </lineage>
</organism>
<name>Y993_STRE4</name>
<dbReference type="EMBL" id="FM204883">
    <property type="protein sequence ID" value="CAW93565.1"/>
    <property type="molecule type" value="Genomic_DNA"/>
</dbReference>
<dbReference type="RefSeq" id="WP_012515497.1">
    <property type="nucleotide sequence ID" value="NC_012471.1"/>
</dbReference>
<dbReference type="SMR" id="C0M8U0"/>
<dbReference type="KEGG" id="seu:SEQ_0993"/>
<dbReference type="HOGENOM" id="CLU_140243_2_0_9"/>
<dbReference type="OrthoDB" id="9811402at2"/>
<dbReference type="Proteomes" id="UP000001365">
    <property type="component" value="Chromosome"/>
</dbReference>
<dbReference type="Gene3D" id="1.20.1500.10">
    <property type="entry name" value="YheA/YmcA-like"/>
    <property type="match status" value="1"/>
</dbReference>
<dbReference type="HAMAP" id="MF_01526">
    <property type="entry name" value="UPF0342"/>
    <property type="match status" value="1"/>
</dbReference>
<dbReference type="InterPro" id="IPR010368">
    <property type="entry name" value="Com_YlbF"/>
</dbReference>
<dbReference type="InterPro" id="IPR023378">
    <property type="entry name" value="YheA/YmcA-like_dom_sf"/>
</dbReference>
<dbReference type="NCBIfam" id="NF010209">
    <property type="entry name" value="PRK13676.1-1"/>
    <property type="match status" value="1"/>
</dbReference>
<dbReference type="Pfam" id="PF06133">
    <property type="entry name" value="Com_YlbF"/>
    <property type="match status" value="1"/>
</dbReference>
<dbReference type="SUPFAM" id="SSF158622">
    <property type="entry name" value="YheA/YmcA-like"/>
    <property type="match status" value="1"/>
</dbReference>
<feature type="chain" id="PRO_1000185143" description="UPF0342 protein SEQ_0993">
    <location>
        <begin position="1"/>
        <end position="113"/>
    </location>
</feature>
<accession>C0M8U0</accession>
<comment type="similarity">
    <text evidence="1">Belongs to the UPF0342 family.</text>
</comment>
<protein>
    <recommendedName>
        <fullName evidence="1">UPF0342 protein SEQ_0993</fullName>
    </recommendedName>
</protein>
<reference key="1">
    <citation type="journal article" date="2009" name="PLoS Pathog.">
        <title>Genomic evidence for the evolution of Streptococcus equi: host restriction, increased virulence, and genetic exchange with human pathogens.</title>
        <authorList>
            <person name="Holden M.T.G."/>
            <person name="Heather Z."/>
            <person name="Paillot R."/>
            <person name="Steward K.F."/>
            <person name="Webb K."/>
            <person name="Ainslie F."/>
            <person name="Jourdan T."/>
            <person name="Bason N.C."/>
            <person name="Holroyd N.E."/>
            <person name="Mungall K."/>
            <person name="Quail M.A."/>
            <person name="Sanders M."/>
            <person name="Simmonds M."/>
            <person name="Willey D."/>
            <person name="Brooks K."/>
            <person name="Aanensen D.M."/>
            <person name="Spratt B.G."/>
            <person name="Jolley K.A."/>
            <person name="Maiden M.C.J."/>
            <person name="Kehoe M."/>
            <person name="Chanter N."/>
            <person name="Bentley S.D."/>
            <person name="Robinson C."/>
            <person name="Maskell D.J."/>
            <person name="Parkhill J."/>
            <person name="Waller A.S."/>
        </authorList>
    </citation>
    <scope>NUCLEOTIDE SEQUENCE [LARGE SCALE GENOMIC DNA]</scope>
    <source>
        <strain>4047</strain>
    </source>
</reference>
<gene>
    <name type="ordered locus">SEQ_0993</name>
</gene>
<evidence type="ECO:0000255" key="1">
    <source>
        <dbReference type="HAMAP-Rule" id="MF_01526"/>
    </source>
</evidence>
<proteinExistence type="inferred from homology"/>